<dbReference type="EMBL" id="AL590842">
    <property type="protein sequence ID" value="CAL19919.1"/>
    <property type="molecule type" value="Genomic_DNA"/>
</dbReference>
<dbReference type="EMBL" id="AE009952">
    <property type="protein sequence ID" value="AAM86473.1"/>
    <property type="molecule type" value="Genomic_DNA"/>
</dbReference>
<dbReference type="EMBL" id="AE017042">
    <property type="protein sequence ID" value="AAS61136.1"/>
    <property type="molecule type" value="Genomic_DNA"/>
</dbReference>
<dbReference type="PIR" id="AE0154">
    <property type="entry name" value="AE0154"/>
</dbReference>
<dbReference type="RefSeq" id="YP_002346291.1">
    <property type="nucleotide sequence ID" value="NC_003143.1"/>
</dbReference>
<dbReference type="SMR" id="Q8ZGM5"/>
<dbReference type="STRING" id="214092.YPO1262"/>
<dbReference type="PaxDb" id="214092-YPO1262"/>
<dbReference type="DNASU" id="1147869"/>
<dbReference type="EnsemblBacteria" id="AAS61136">
    <property type="protein sequence ID" value="AAS61136"/>
    <property type="gene ID" value="YP_0879"/>
</dbReference>
<dbReference type="KEGG" id="ype:YPO1262"/>
<dbReference type="KEGG" id="ypk:y2922"/>
<dbReference type="KEGG" id="ypm:YP_0879"/>
<dbReference type="PATRIC" id="fig|214092.21.peg.1567"/>
<dbReference type="eggNOG" id="COG3081">
    <property type="taxonomic scope" value="Bacteria"/>
</dbReference>
<dbReference type="HOGENOM" id="CLU_063050_0_1_6"/>
<dbReference type="OMA" id="FFMDFLA"/>
<dbReference type="OrthoDB" id="9131762at2"/>
<dbReference type="Proteomes" id="UP000000815">
    <property type="component" value="Chromosome"/>
</dbReference>
<dbReference type="Proteomes" id="UP000001019">
    <property type="component" value="Chromosome"/>
</dbReference>
<dbReference type="Proteomes" id="UP000002490">
    <property type="component" value="Chromosome"/>
</dbReference>
<dbReference type="GO" id="GO:0043590">
    <property type="term" value="C:bacterial nucleoid"/>
    <property type="evidence" value="ECO:0000318"/>
    <property type="project" value="GO_Central"/>
</dbReference>
<dbReference type="GO" id="GO:0005737">
    <property type="term" value="C:cytoplasm"/>
    <property type="evidence" value="ECO:0007669"/>
    <property type="project" value="UniProtKB-UniRule"/>
</dbReference>
<dbReference type="GO" id="GO:0003690">
    <property type="term" value="F:double-stranded DNA binding"/>
    <property type="evidence" value="ECO:0000318"/>
    <property type="project" value="GO_Central"/>
</dbReference>
<dbReference type="GO" id="GO:0003727">
    <property type="term" value="F:single-stranded RNA binding"/>
    <property type="evidence" value="ECO:0000318"/>
    <property type="project" value="GO_Central"/>
</dbReference>
<dbReference type="HAMAP" id="MF_00730">
    <property type="entry name" value="NdpA"/>
    <property type="match status" value="1"/>
</dbReference>
<dbReference type="InterPro" id="IPR007358">
    <property type="entry name" value="Nucleoid_associated_NdpA"/>
</dbReference>
<dbReference type="NCBIfam" id="NF001557">
    <property type="entry name" value="PRK00378.1"/>
    <property type="match status" value="1"/>
</dbReference>
<dbReference type="PANTHER" id="PTHR38772">
    <property type="match status" value="1"/>
</dbReference>
<dbReference type="PANTHER" id="PTHR38772:SF1">
    <property type="entry name" value="NUCLEOID-ASSOCIATED PROTEIN YEJK"/>
    <property type="match status" value="1"/>
</dbReference>
<dbReference type="Pfam" id="PF04245">
    <property type="entry name" value="NA37"/>
    <property type="match status" value="1"/>
</dbReference>
<reference key="1">
    <citation type="journal article" date="2001" name="Nature">
        <title>Genome sequence of Yersinia pestis, the causative agent of plague.</title>
        <authorList>
            <person name="Parkhill J."/>
            <person name="Wren B.W."/>
            <person name="Thomson N.R."/>
            <person name="Titball R.W."/>
            <person name="Holden M.T.G."/>
            <person name="Prentice M.B."/>
            <person name="Sebaihia M."/>
            <person name="James K.D."/>
            <person name="Churcher C.M."/>
            <person name="Mungall K.L."/>
            <person name="Baker S."/>
            <person name="Basham D."/>
            <person name="Bentley S.D."/>
            <person name="Brooks K."/>
            <person name="Cerdeno-Tarraga A.-M."/>
            <person name="Chillingworth T."/>
            <person name="Cronin A."/>
            <person name="Davies R.M."/>
            <person name="Davis P."/>
            <person name="Dougan G."/>
            <person name="Feltwell T."/>
            <person name="Hamlin N."/>
            <person name="Holroyd S."/>
            <person name="Jagels K."/>
            <person name="Karlyshev A.V."/>
            <person name="Leather S."/>
            <person name="Moule S."/>
            <person name="Oyston P.C.F."/>
            <person name="Quail M.A."/>
            <person name="Rutherford K.M."/>
            <person name="Simmonds M."/>
            <person name="Skelton J."/>
            <person name="Stevens K."/>
            <person name="Whitehead S."/>
            <person name="Barrell B.G."/>
        </authorList>
    </citation>
    <scope>NUCLEOTIDE SEQUENCE [LARGE SCALE GENOMIC DNA]</scope>
    <source>
        <strain>CO-92 / Biovar Orientalis</strain>
    </source>
</reference>
<reference key="2">
    <citation type="journal article" date="2002" name="J. Bacteriol.">
        <title>Genome sequence of Yersinia pestis KIM.</title>
        <authorList>
            <person name="Deng W."/>
            <person name="Burland V."/>
            <person name="Plunkett G. III"/>
            <person name="Boutin A."/>
            <person name="Mayhew G.F."/>
            <person name="Liss P."/>
            <person name="Perna N.T."/>
            <person name="Rose D.J."/>
            <person name="Mau B."/>
            <person name="Zhou S."/>
            <person name="Schwartz D.C."/>
            <person name="Fetherston J.D."/>
            <person name="Lindler L.E."/>
            <person name="Brubaker R.R."/>
            <person name="Plano G.V."/>
            <person name="Straley S.C."/>
            <person name="McDonough K.A."/>
            <person name="Nilles M.L."/>
            <person name="Matson J.S."/>
            <person name="Blattner F.R."/>
            <person name="Perry R.D."/>
        </authorList>
    </citation>
    <scope>NUCLEOTIDE SEQUENCE [LARGE SCALE GENOMIC DNA]</scope>
    <source>
        <strain>KIM10+ / Biovar Mediaevalis</strain>
    </source>
</reference>
<reference key="3">
    <citation type="journal article" date="2004" name="DNA Res.">
        <title>Complete genome sequence of Yersinia pestis strain 91001, an isolate avirulent to humans.</title>
        <authorList>
            <person name="Song Y."/>
            <person name="Tong Z."/>
            <person name="Wang J."/>
            <person name="Wang L."/>
            <person name="Guo Z."/>
            <person name="Han Y."/>
            <person name="Zhang J."/>
            <person name="Pei D."/>
            <person name="Zhou D."/>
            <person name="Qin H."/>
            <person name="Pang X."/>
            <person name="Han Y."/>
            <person name="Zhai J."/>
            <person name="Li M."/>
            <person name="Cui B."/>
            <person name="Qi Z."/>
            <person name="Jin L."/>
            <person name="Dai R."/>
            <person name="Chen F."/>
            <person name="Li S."/>
            <person name="Ye C."/>
            <person name="Du Z."/>
            <person name="Lin W."/>
            <person name="Wang J."/>
            <person name="Yu J."/>
            <person name="Yang H."/>
            <person name="Wang J."/>
            <person name="Huang P."/>
            <person name="Yang R."/>
        </authorList>
    </citation>
    <scope>NUCLEOTIDE SEQUENCE [LARGE SCALE GENOMIC DNA]</scope>
    <source>
        <strain>91001 / Biovar Mediaevalis</strain>
    </source>
</reference>
<sequence length="334" mass="37740">MSLDIDQIALHQLIKRDEQTLDVVLRDSLLPTNAVVEEMMAELHRVYSAKSKAYGLFNEQSELADALKRSRKGDEDFLSFSRAATGRLRDELAKYPFAEGGVVLFCQYRYLAVEYLLISVLSSCHSMRVNEQLDLSTTHYLDINRADIVARIDLTEWETNPESTRYLTFLKGRVGRKVSDFFMDFLSAAEGLDTKAQNRGLLQAVDDYCADAELGKNERQAYRQQVYSYCNEQLQAGEEIALQVLAQELPKLGEKDFQQFSAEQGYALEESFPADRGTLRQLTKFAGSGGGLSINFDALLLDERIFWDAATDTLTIKGTPPNLRDQLQRRAGSK</sequence>
<protein>
    <recommendedName>
        <fullName evidence="1">Nucleoid-associated protein YPO1262/y2922/YP_0879</fullName>
    </recommendedName>
</protein>
<comment type="subcellular location">
    <subcellularLocation>
        <location evidence="1">Cytoplasm</location>
        <location evidence="1">Nucleoid</location>
    </subcellularLocation>
</comment>
<comment type="similarity">
    <text evidence="1">Belongs to the YejK family.</text>
</comment>
<accession>Q8ZGM5</accession>
<accession>Q0WHE7</accession>
<name>NDPA_YERPE</name>
<gene>
    <name type="ordered locus">YPO1262</name>
    <name type="ordered locus">y2922</name>
    <name type="ordered locus">YP_0879</name>
</gene>
<evidence type="ECO:0000255" key="1">
    <source>
        <dbReference type="HAMAP-Rule" id="MF_00730"/>
    </source>
</evidence>
<organism>
    <name type="scientific">Yersinia pestis</name>
    <dbReference type="NCBI Taxonomy" id="632"/>
    <lineage>
        <taxon>Bacteria</taxon>
        <taxon>Pseudomonadati</taxon>
        <taxon>Pseudomonadota</taxon>
        <taxon>Gammaproteobacteria</taxon>
        <taxon>Enterobacterales</taxon>
        <taxon>Yersiniaceae</taxon>
        <taxon>Yersinia</taxon>
    </lineage>
</organism>
<proteinExistence type="inferred from homology"/>
<feature type="chain" id="PRO_0000210926" description="Nucleoid-associated protein YPO1262/y2922/YP_0879">
    <location>
        <begin position="1"/>
        <end position="334"/>
    </location>
</feature>
<keyword id="KW-0963">Cytoplasm</keyword>
<keyword id="KW-1185">Reference proteome</keyword>